<name>MRL7_ARATH</name>
<comment type="function">
    <text evidence="3 4 5 6 7 8 9">Plays an essential role in early steps of chloroplast development (PubMed:21220584, PubMed:21515910, PubMed:23956074, PubMed:24111559, PubMed:33824329). Involved in the regulation of plastid gene expression (PubMed:21515910, PubMed:23956074, PubMed:24111559). May positively regulate plastid-encoded RNA polymerase (PEP) activity through binding to FSD3 and CITRX/TRXZ (PubMed:23956074). Involved in redox-mediated regulation of chloroplast development (PubMed:23956074, PubMed:24132784). Possesses disulfide reductase activity in vitro (PubMed:23956074). Required for the proper function of the plastid transcriptional machinery and protein accumulation in thylakoid membranes. May function as molecular chaperone to ensure proper organization of the nucleoids in chloroplasts (PubMed:24111559). May mediate some aspect of thylakoid structure or function that controls non-photochemical quenching (NPQ) (PubMed:21220584, PubMed:21515910, PubMed:23956074, PubMed:24111559, PubMed:24132784). Participates in the early light signaling events of photobody biogenesis in chloroplasts (PubMed:31201314). May mediate the degradation of two repressors of chloroplast biogenesis, PIF1 and PIF3 in nucleus (PubMed:31201314). Collaboratively with PTAC12/HMR/PAP5, involved in the regulation of thermoresponsive responses via the stabilization of PIF4 in the daytime to initiate thermomorphogenesis (PubMed:33824329).</text>
</comment>
<comment type="subunit">
    <text evidence="5 6 7 9">Component of the transcriptionally active chromosome (TAC) complexes (PubMed:24111559). Interacts with FSD2 and PRDA1 (PubMed:24132784). Interacts with FSD3 and CITRX/TRXZ (PubMed:23956074). Binds to PTAC12/HMR/PAP5 (PubMed:33824329).</text>
</comment>
<comment type="subcellular location">
    <subcellularLocation>
        <location evidence="3 6">Plastid</location>
        <location evidence="3 6">Chloroplast</location>
    </subcellularLocation>
    <subcellularLocation>
        <location evidence="4 7 8">Plastid</location>
        <location evidence="4 7 8">Chloroplast stroma</location>
        <location evidence="4 7 8">Chloroplast nucleoid</location>
    </subcellularLocation>
    <subcellularLocation>
        <location evidence="8">Nucleus</location>
    </subcellularLocation>
    <text evidence="3">Associated with punctuate structures in chloroplasts.</text>
</comment>
<comment type="tissue specificity">
    <text evidence="4">Expressed in leaves, shoots, stems, cauline leaves, flower buds, flowers and siliques.</text>
</comment>
<comment type="induction">
    <text evidence="5">Induced by light.</text>
</comment>
<comment type="disruption phenotype">
    <text evidence="3 4 5 9">Seedling lethality due to deficiency in chloroplast development (PubMed:21220584, PubMed:21515910, PubMed:23956074). In the rcb-10 mutant, impeded PIF4 accumulation leading to lost warm-temperatures responses (e.g. 27 degrees Celsius) (PubMed:33824329).</text>
</comment>
<comment type="sequence caution" evidence="14">
    <conflict type="erroneous gene model prediction">
        <sequence resource="EMBL-CDS" id="CAB81447"/>
    </conflict>
</comment>
<feature type="transit peptide" description="Chloroplast" evidence="1">
    <location>
        <begin position="1"/>
        <end position="59"/>
    </location>
</feature>
<feature type="chain" id="PRO_0000439380" description="Thioredoxin-like fold domain-containing protein MRL7, chloroplastic">
    <location>
        <begin position="60"/>
        <end position="331"/>
    </location>
</feature>
<feature type="region of interest" description="Disordered" evidence="2">
    <location>
        <begin position="52"/>
        <end position="105"/>
    </location>
</feature>
<feature type="region of interest" description="Disordered" evidence="2">
    <location>
        <begin position="141"/>
        <end position="160"/>
    </location>
</feature>
<feature type="compositionally biased region" description="Acidic residues" evidence="2">
    <location>
        <begin position="142"/>
        <end position="160"/>
    </location>
</feature>
<feature type="mutagenesis site" description="In rcb-101; restoration of thermoresponsive PIF4 accumulation in hmr-22 background, and suppression of hmr-22 mutant defects in chloroplast biogenesis and photomorphogenesis." evidence="9">
    <original>A</original>
    <variation>V</variation>
    <location>
        <position position="275"/>
    </location>
</feature>
<feature type="mutagenesis site" description="In svr4-1; retarded growth, pale green leaves and enhanced non-photochemical quenching (NPQ)." evidence="3">
    <original>R</original>
    <variation>W</variation>
    <location>
        <position position="291"/>
    </location>
</feature>
<feature type="sequence conflict" description="In Ref. 3; BAD44276/BAD44538." evidence="14" ref="3">
    <original>E</original>
    <variation>G</variation>
    <location>
        <position position="145"/>
    </location>
</feature>
<proteinExistence type="evidence at protein level"/>
<sequence length="331" mass="38241">MSFFAVACSAPRSSMLLTGLNSSFSDMHRSPLFVFPVTISSRSVKRFAAVSSDSVLDPESKNQTRSRRKNKEAVTPIAETENNEKFPTKVPRKSKRGRRSEADAVEDYVRSSLERTFSTIKEQNPEVFENKEKANFIKDRGVDEEEEEEEEMVVEEEDPDWPVDTDVGWGIKASEYFDTHPIKNVVGDDGSEIDWEGEIDDSWVKEINCLEWESFAFHPSPLVVLVFERYKRASDNWKTLKELEKAIKVYWDAKDRLPPRAVKIDLNIETDLAYALKAKECPQILFLRGNRILYREKDFRTADELVHMIAHFYYKAKRPSCVDKANVTPYC</sequence>
<accession>F4JLC1</accession>
<accession>Q67XP3</accession>
<accession>Q9M0H2</accession>
<protein>
    <recommendedName>
        <fullName evidence="14">Thioredoxin-like fold domain-containing protein MRL7, chloroplastic</fullName>
    </recommendedName>
    <alternativeName>
        <fullName evidence="12">Protein EARLY CHLOROPLAST BIOGENESIS 1</fullName>
        <shortName evidence="12">AtECB1</shortName>
    </alternativeName>
    <alternativeName>
        <fullName evidence="11">Protein MESOPHYLL-CELL RNAI LIBRARY LINE 7</fullName>
        <shortName evidence="11">AtMRL7</shortName>
    </alternativeName>
    <alternativeName>
        <fullName evidence="13">Protein REGULATOR OF CHLOROPLAST BIOGENESIS</fullName>
    </alternativeName>
    <alternativeName>
        <fullName evidence="10">Protein SUPPRESSOR OF VARIEGATION 4</fullName>
    </alternativeName>
</protein>
<reference key="1">
    <citation type="journal article" date="1999" name="Nature">
        <title>Sequence and analysis of chromosome 4 of the plant Arabidopsis thaliana.</title>
        <authorList>
            <person name="Mayer K.F.X."/>
            <person name="Schueller C."/>
            <person name="Wambutt R."/>
            <person name="Murphy G."/>
            <person name="Volckaert G."/>
            <person name="Pohl T."/>
            <person name="Duesterhoeft A."/>
            <person name="Stiekema W."/>
            <person name="Entian K.-D."/>
            <person name="Terryn N."/>
            <person name="Harris B."/>
            <person name="Ansorge W."/>
            <person name="Brandt P."/>
            <person name="Grivell L.A."/>
            <person name="Rieger M."/>
            <person name="Weichselgartner M."/>
            <person name="de Simone V."/>
            <person name="Obermaier B."/>
            <person name="Mache R."/>
            <person name="Mueller M."/>
            <person name="Kreis M."/>
            <person name="Delseny M."/>
            <person name="Puigdomenech P."/>
            <person name="Watson M."/>
            <person name="Schmidtheini T."/>
            <person name="Reichert B."/>
            <person name="Portetelle D."/>
            <person name="Perez-Alonso M."/>
            <person name="Boutry M."/>
            <person name="Bancroft I."/>
            <person name="Vos P."/>
            <person name="Hoheisel J."/>
            <person name="Zimmermann W."/>
            <person name="Wedler H."/>
            <person name="Ridley P."/>
            <person name="Langham S.-A."/>
            <person name="McCullagh B."/>
            <person name="Bilham L."/>
            <person name="Robben J."/>
            <person name="van der Schueren J."/>
            <person name="Grymonprez B."/>
            <person name="Chuang Y.-J."/>
            <person name="Vandenbussche F."/>
            <person name="Braeken M."/>
            <person name="Weltjens I."/>
            <person name="Voet M."/>
            <person name="Bastiaens I."/>
            <person name="Aert R."/>
            <person name="Defoor E."/>
            <person name="Weitzenegger T."/>
            <person name="Bothe G."/>
            <person name="Ramsperger U."/>
            <person name="Hilbert H."/>
            <person name="Braun M."/>
            <person name="Holzer E."/>
            <person name="Brandt A."/>
            <person name="Peters S."/>
            <person name="van Staveren M."/>
            <person name="Dirkse W."/>
            <person name="Mooijman P."/>
            <person name="Klein Lankhorst R."/>
            <person name="Rose M."/>
            <person name="Hauf J."/>
            <person name="Koetter P."/>
            <person name="Berneiser S."/>
            <person name="Hempel S."/>
            <person name="Feldpausch M."/>
            <person name="Lamberth S."/>
            <person name="Van den Daele H."/>
            <person name="De Keyser A."/>
            <person name="Buysshaert C."/>
            <person name="Gielen J."/>
            <person name="Villarroel R."/>
            <person name="De Clercq R."/>
            <person name="van Montagu M."/>
            <person name="Rogers J."/>
            <person name="Cronin A."/>
            <person name="Quail M.A."/>
            <person name="Bray-Allen S."/>
            <person name="Clark L."/>
            <person name="Doggett J."/>
            <person name="Hall S."/>
            <person name="Kay M."/>
            <person name="Lennard N."/>
            <person name="McLay K."/>
            <person name="Mayes R."/>
            <person name="Pettett A."/>
            <person name="Rajandream M.A."/>
            <person name="Lyne M."/>
            <person name="Benes V."/>
            <person name="Rechmann S."/>
            <person name="Borkova D."/>
            <person name="Bloecker H."/>
            <person name="Scharfe M."/>
            <person name="Grimm M."/>
            <person name="Loehnert T.-H."/>
            <person name="Dose S."/>
            <person name="de Haan M."/>
            <person name="Maarse A.C."/>
            <person name="Schaefer M."/>
            <person name="Mueller-Auer S."/>
            <person name="Gabel C."/>
            <person name="Fuchs M."/>
            <person name="Fartmann B."/>
            <person name="Granderath K."/>
            <person name="Dauner D."/>
            <person name="Herzl A."/>
            <person name="Neumann S."/>
            <person name="Argiriou A."/>
            <person name="Vitale D."/>
            <person name="Liguori R."/>
            <person name="Piravandi E."/>
            <person name="Massenet O."/>
            <person name="Quigley F."/>
            <person name="Clabauld G."/>
            <person name="Muendlein A."/>
            <person name="Felber R."/>
            <person name="Schnabl S."/>
            <person name="Hiller R."/>
            <person name="Schmidt W."/>
            <person name="Lecharny A."/>
            <person name="Aubourg S."/>
            <person name="Chefdor F."/>
            <person name="Cooke R."/>
            <person name="Berger C."/>
            <person name="Monfort A."/>
            <person name="Casacuberta E."/>
            <person name="Gibbons T."/>
            <person name="Weber N."/>
            <person name="Vandenbol M."/>
            <person name="Bargues M."/>
            <person name="Terol J."/>
            <person name="Torres A."/>
            <person name="Perez-Perez A."/>
            <person name="Purnelle B."/>
            <person name="Bent E."/>
            <person name="Johnson S."/>
            <person name="Tacon D."/>
            <person name="Jesse T."/>
            <person name="Heijnen L."/>
            <person name="Schwarz S."/>
            <person name="Scholler P."/>
            <person name="Heber S."/>
            <person name="Francs P."/>
            <person name="Bielke C."/>
            <person name="Frishman D."/>
            <person name="Haase D."/>
            <person name="Lemcke K."/>
            <person name="Mewes H.-W."/>
            <person name="Stocker S."/>
            <person name="Zaccaria P."/>
            <person name="Bevan M."/>
            <person name="Wilson R.K."/>
            <person name="de la Bastide M."/>
            <person name="Habermann K."/>
            <person name="Parnell L."/>
            <person name="Dedhia N."/>
            <person name="Gnoj L."/>
            <person name="Schutz K."/>
            <person name="Huang E."/>
            <person name="Spiegel L."/>
            <person name="Sekhon M."/>
            <person name="Murray J."/>
            <person name="Sheet P."/>
            <person name="Cordes M."/>
            <person name="Abu-Threideh J."/>
            <person name="Stoneking T."/>
            <person name="Kalicki J."/>
            <person name="Graves T."/>
            <person name="Harmon G."/>
            <person name="Edwards J."/>
            <person name="Latreille P."/>
            <person name="Courtney L."/>
            <person name="Cloud J."/>
            <person name="Abbott A."/>
            <person name="Scott K."/>
            <person name="Johnson D."/>
            <person name="Minx P."/>
            <person name="Bentley D."/>
            <person name="Fulton B."/>
            <person name="Miller N."/>
            <person name="Greco T."/>
            <person name="Kemp K."/>
            <person name="Kramer J."/>
            <person name="Fulton L."/>
            <person name="Mardis E."/>
            <person name="Dante M."/>
            <person name="Pepin K."/>
            <person name="Hillier L.W."/>
            <person name="Nelson J."/>
            <person name="Spieth J."/>
            <person name="Ryan E."/>
            <person name="Andrews S."/>
            <person name="Geisel C."/>
            <person name="Layman D."/>
            <person name="Du H."/>
            <person name="Ali J."/>
            <person name="Berghoff A."/>
            <person name="Jones K."/>
            <person name="Drone K."/>
            <person name="Cotton M."/>
            <person name="Joshu C."/>
            <person name="Antonoiu B."/>
            <person name="Zidanic M."/>
            <person name="Strong C."/>
            <person name="Sun H."/>
            <person name="Lamar B."/>
            <person name="Yordan C."/>
            <person name="Ma P."/>
            <person name="Zhong J."/>
            <person name="Preston R."/>
            <person name="Vil D."/>
            <person name="Shekher M."/>
            <person name="Matero A."/>
            <person name="Shah R."/>
            <person name="Swaby I.K."/>
            <person name="O'Shaughnessy A."/>
            <person name="Rodriguez M."/>
            <person name="Hoffman J."/>
            <person name="Till S."/>
            <person name="Granat S."/>
            <person name="Shohdy N."/>
            <person name="Hasegawa A."/>
            <person name="Hameed A."/>
            <person name="Lodhi M."/>
            <person name="Johnson A."/>
            <person name="Chen E."/>
            <person name="Marra M.A."/>
            <person name="Martienssen R."/>
            <person name="McCombie W.R."/>
        </authorList>
    </citation>
    <scope>NUCLEOTIDE SEQUENCE [LARGE SCALE GENOMIC DNA]</scope>
    <source>
        <strain>cv. Columbia</strain>
    </source>
</reference>
<reference key="2">
    <citation type="journal article" date="2017" name="Plant J.">
        <title>Araport11: a complete reannotation of the Arabidopsis thaliana reference genome.</title>
        <authorList>
            <person name="Cheng C.Y."/>
            <person name="Krishnakumar V."/>
            <person name="Chan A.P."/>
            <person name="Thibaud-Nissen F."/>
            <person name="Schobel S."/>
            <person name="Town C.D."/>
        </authorList>
    </citation>
    <scope>GENOME REANNOTATION</scope>
    <source>
        <strain>cv. Columbia</strain>
    </source>
</reference>
<reference key="3">
    <citation type="submission" date="2004-09" db="EMBL/GenBank/DDBJ databases">
        <title>Large-scale analysis of RIKEN Arabidopsis full-length (RAFL) cDNAs.</title>
        <authorList>
            <person name="Totoki Y."/>
            <person name="Seki M."/>
            <person name="Ishida J."/>
            <person name="Nakajima M."/>
            <person name="Enju A."/>
            <person name="Kamiya A."/>
            <person name="Narusaka M."/>
            <person name="Shin-i T."/>
            <person name="Nakagawa M."/>
            <person name="Sakamoto N."/>
            <person name="Oishi K."/>
            <person name="Kohara Y."/>
            <person name="Kobayashi M."/>
            <person name="Toyoda A."/>
            <person name="Sakaki Y."/>
            <person name="Sakurai T."/>
            <person name="Iida K."/>
            <person name="Akiyama K."/>
            <person name="Satou M."/>
            <person name="Toyoda T."/>
            <person name="Konagaya A."/>
            <person name="Carninci P."/>
            <person name="Kawai J."/>
            <person name="Hayashizaki Y."/>
            <person name="Shinozaki K."/>
        </authorList>
    </citation>
    <scope>NUCLEOTIDE SEQUENCE [LARGE SCALE MRNA] OF 5-331</scope>
    <source>
        <strain>cv. Columbia</strain>
    </source>
</reference>
<reference key="4">
    <citation type="journal article" date="2011" name="Mol. Plant">
        <title>SUPPRESSOR OF VARIEGATION4, a new var2 suppressor locus, encodes a pioneer protein that is required for chloroplast biogenesis.</title>
        <authorList>
            <person name="Yu F."/>
            <person name="Park S.S."/>
            <person name="Liu X."/>
            <person name="Foudree A."/>
            <person name="Fu A."/>
            <person name="Powikrowska M."/>
            <person name="Khrouchtchova A."/>
            <person name="Jensen P.E."/>
            <person name="Kriger J.N."/>
            <person name="Gray G.R."/>
            <person name="Rodermel S.R."/>
        </authorList>
    </citation>
    <scope>FUNCTION</scope>
    <scope>SUBCELLULAR LOCATION</scope>
    <scope>DISRUPTION PHENOTYPE</scope>
    <scope>MUTAGENESIS OF ARG-291</scope>
</reference>
<reference key="5">
    <citation type="journal article" date="2011" name="Plant Cell Physiol.">
        <title>Two novel proteins, MRL7 and its paralog MRL7-L, have essential but functionally distinct roles in chloroplast development and are involved in plastid gene expression regulation in Arabidopsis.</title>
        <authorList>
            <person name="Qiao J."/>
            <person name="Ma C."/>
            <person name="Wimmelbacher M."/>
            <person name="Boernke F."/>
            <person name="Luo M."/>
        </authorList>
    </citation>
    <scope>FUNCTION</scope>
    <scope>SUBCELLULAR LOCATION</scope>
    <scope>TISSUE SPECIFICITY</scope>
    <scope>DISRUPTION PHENOTYPE</scope>
</reference>
<reference key="6">
    <citation type="journal article" date="2013" name="Plant Cell Physiol.">
        <title>PRDA1, a novel chloroplast nucleoid protein, is required for early chloroplast development and is involved in the regulation of plastid gene expression in Arabidopsis.</title>
        <authorList>
            <person name="Qiao J."/>
            <person name="Li J."/>
            <person name="Chu W."/>
            <person name="Luo M."/>
        </authorList>
    </citation>
    <scope>FUNCTION</scope>
    <scope>INTERACTION WITH FSD2 AND PRDA1</scope>
    <scope>SUBCELLULAR LOCATION</scope>
</reference>
<reference key="7">
    <citation type="journal article" date="2014" name="Mol. Plant">
        <title>AtECB1/MRL7, a thioredoxin-like fold protein with disulfide reductase activity, regulates chloroplast gene expression and chloroplast biogenesis in Arabidopsis thaliana.</title>
        <authorList>
            <person name="Yua Q.B."/>
            <person name="Ma Q."/>
            <person name="Kong M.M."/>
            <person name="Zhao T.T."/>
            <person name="Zhang X.L."/>
            <person name="Zhou Q."/>
            <person name="Huang C."/>
            <person name="Chong K."/>
            <person name="Yang Z.N."/>
        </authorList>
    </citation>
    <scope>FUNCTION</scope>
    <scope>INTERACTION WITH FSD3 AND CITRX/TRXZ</scope>
    <scope>INDUCTION BY LIGHT</scope>
    <scope>DISRUPTION PHENOTYPE</scope>
</reference>
<reference key="8">
    <citation type="journal article" date="2014" name="Physiol. Plantarum">
        <title>SVR4 (suppressor of variegation 4) and SVR4-like: two proteins with a role in proper organization of the chloroplast genetic machinery.</title>
        <authorList>
            <person name="Powikrowska M."/>
            <person name="Khrouchtchova A."/>
            <person name="Martens H.J."/>
            <person name="Zygadlo-Nielsen A."/>
            <person name="Melonek J."/>
            <person name="Schulz A."/>
            <person name="Krupinska K."/>
            <person name="Rodermel S."/>
            <person name="Jensen P.E."/>
        </authorList>
    </citation>
    <scope>FUNCTION</scope>
    <scope>SUBCELLULAR LOCATION</scope>
</reference>
<reference key="9">
    <citation type="journal article" date="2019" name="Nat. Commun.">
        <title>NCP activates chloroplast transcription by controlling phytochrome-dependent dual nuclear and plastidial switches.</title>
        <authorList>
            <person name="Yang E.J."/>
            <person name="Yoo C.Y."/>
            <person name="Liu J."/>
            <person name="Wang H."/>
            <person name="Cao J."/>
            <person name="Li F.W."/>
            <person name="Pryer K.M."/>
            <person name="Sun T.P."/>
            <person name="Weigel D."/>
            <person name="Zhou P."/>
            <person name="Chen M."/>
        </authorList>
    </citation>
    <scope>FUNCTION</scope>
    <scope>SUBCELLULAR LOCATION</scope>
</reference>
<reference key="10">
    <citation type="journal article" date="2021" name="Nat. Commun.">
        <title>RCB initiates Arabidopsis thermomorphogenesis by stabilizing the thermoregulator PIF4 in the daytime.</title>
        <authorList>
            <person name="Qiu Y."/>
            <person name="Pasoreck E.K."/>
            <person name="Yoo C.Y."/>
            <person name="He J."/>
            <person name="Wang H."/>
            <person name="Bajracharya A."/>
            <person name="Li M."/>
            <person name="Larsen H.D."/>
            <person name="Cheung S."/>
            <person name="Chen M."/>
        </authorList>
    </citation>
    <scope>FUNCTION</scope>
    <scope>MUTAGENESIS OF ALA-275</scope>
    <scope>DISRUPTION PHENOTYPE</scope>
    <scope>INTERACTION WITH PTAC12/HMR/PAP5</scope>
    <source>
        <strain>cv. Columbia</strain>
    </source>
</reference>
<evidence type="ECO:0000255" key="1"/>
<evidence type="ECO:0000256" key="2">
    <source>
        <dbReference type="SAM" id="MobiDB-lite"/>
    </source>
</evidence>
<evidence type="ECO:0000269" key="3">
    <source>
    </source>
</evidence>
<evidence type="ECO:0000269" key="4">
    <source>
    </source>
</evidence>
<evidence type="ECO:0000269" key="5">
    <source>
    </source>
</evidence>
<evidence type="ECO:0000269" key="6">
    <source>
    </source>
</evidence>
<evidence type="ECO:0000269" key="7">
    <source>
    </source>
</evidence>
<evidence type="ECO:0000269" key="8">
    <source>
    </source>
</evidence>
<evidence type="ECO:0000269" key="9">
    <source>
    </source>
</evidence>
<evidence type="ECO:0000303" key="10">
    <source>
    </source>
</evidence>
<evidence type="ECO:0000303" key="11">
    <source>
    </source>
</evidence>
<evidence type="ECO:0000303" key="12">
    <source>
    </source>
</evidence>
<evidence type="ECO:0000303" key="13">
    <source>
    </source>
</evidence>
<evidence type="ECO:0000305" key="14"/>
<evidence type="ECO:0000312" key="15">
    <source>
        <dbReference type="Araport" id="AT4G28590"/>
    </source>
</evidence>
<dbReference type="EMBL" id="AL161573">
    <property type="protein sequence ID" value="CAB81447.1"/>
    <property type="status" value="ALT_SEQ"/>
    <property type="molecule type" value="Genomic_DNA"/>
</dbReference>
<dbReference type="EMBL" id="CP002687">
    <property type="protein sequence ID" value="AEE85510.1"/>
    <property type="molecule type" value="Genomic_DNA"/>
</dbReference>
<dbReference type="EMBL" id="AK176513">
    <property type="protein sequence ID" value="BAD44276.1"/>
    <property type="molecule type" value="mRNA"/>
</dbReference>
<dbReference type="EMBL" id="AK176775">
    <property type="protein sequence ID" value="BAD44538.1"/>
    <property type="molecule type" value="mRNA"/>
</dbReference>
<dbReference type="PIR" id="T10653">
    <property type="entry name" value="T10653"/>
</dbReference>
<dbReference type="RefSeq" id="NP_194588.2">
    <property type="nucleotide sequence ID" value="NM_119001.4"/>
</dbReference>
<dbReference type="SMR" id="F4JLC1"/>
<dbReference type="FunCoup" id="F4JLC1">
    <property type="interactions" value="636"/>
</dbReference>
<dbReference type="STRING" id="3702.F4JLC1"/>
<dbReference type="PaxDb" id="3702-AT4G28590.1"/>
<dbReference type="ProteomicsDB" id="238993"/>
<dbReference type="EnsemblPlants" id="AT4G28590.1">
    <property type="protein sequence ID" value="AT4G28590.1"/>
    <property type="gene ID" value="AT4G28590"/>
</dbReference>
<dbReference type="GeneID" id="828977"/>
<dbReference type="Gramene" id="AT4G28590.1">
    <property type="protein sequence ID" value="AT4G28590.1"/>
    <property type="gene ID" value="AT4G28590"/>
</dbReference>
<dbReference type="KEGG" id="ath:AT4G28590"/>
<dbReference type="Araport" id="AT4G28590"/>
<dbReference type="TAIR" id="AT4G28590">
    <property type="gene designation" value="MRL7"/>
</dbReference>
<dbReference type="eggNOG" id="ENOG502QQCJ">
    <property type="taxonomic scope" value="Eukaryota"/>
</dbReference>
<dbReference type="HOGENOM" id="CLU_072426_1_0_1"/>
<dbReference type="InParanoid" id="F4JLC1"/>
<dbReference type="OMA" id="KVYWDAK"/>
<dbReference type="OrthoDB" id="1920727at2759"/>
<dbReference type="PRO" id="PR:F4JLC1"/>
<dbReference type="Proteomes" id="UP000006548">
    <property type="component" value="Chromosome 4"/>
</dbReference>
<dbReference type="ExpressionAtlas" id="F4JLC1">
    <property type="expression patterns" value="baseline and differential"/>
</dbReference>
<dbReference type="GO" id="GO:0042644">
    <property type="term" value="C:chloroplast nucleoid"/>
    <property type="evidence" value="ECO:0000314"/>
    <property type="project" value="TAIR"/>
</dbReference>
<dbReference type="GO" id="GO:0005634">
    <property type="term" value="C:nucleus"/>
    <property type="evidence" value="ECO:0007669"/>
    <property type="project" value="UniProtKB-SubCell"/>
</dbReference>
<dbReference type="GO" id="GO:0009658">
    <property type="term" value="P:chloroplast organization"/>
    <property type="evidence" value="ECO:0000315"/>
    <property type="project" value="UniProtKB"/>
</dbReference>
<dbReference type="GO" id="GO:0006355">
    <property type="term" value="P:regulation of DNA-templated transcription"/>
    <property type="evidence" value="ECO:0000315"/>
    <property type="project" value="TAIR"/>
</dbReference>
<dbReference type="GO" id="GO:0009266">
    <property type="term" value="P:response to temperature stimulus"/>
    <property type="evidence" value="ECO:0000315"/>
    <property type="project" value="UniProtKB"/>
</dbReference>
<dbReference type="FunFam" id="3.40.30.10:FF:000195">
    <property type="entry name" value="thioredoxin-like fold domain-containing protein MRL7, chloroplastic"/>
    <property type="match status" value="1"/>
</dbReference>
<dbReference type="Gene3D" id="3.40.30.10">
    <property type="entry name" value="Glutaredoxin"/>
    <property type="match status" value="1"/>
</dbReference>
<dbReference type="InterPro" id="IPR044701">
    <property type="entry name" value="MRL7/MRL7L"/>
</dbReference>
<dbReference type="InterPro" id="IPR036249">
    <property type="entry name" value="Thioredoxin-like_sf"/>
</dbReference>
<dbReference type="PANTHER" id="PTHR34669:SF2">
    <property type="entry name" value="THIOREDOXIN-LIKE FOLD DOMAIN-CONTAINING PROTEIN MRL7, CHLOROPLASTIC"/>
    <property type="match status" value="1"/>
</dbReference>
<dbReference type="PANTHER" id="PTHR34669">
    <property type="entry name" value="THIOREDOXIN-LIKE FOLD DOMAIN-CONTAINING PROTEIN MRL7L, CHLOROPLASTIC"/>
    <property type="match status" value="1"/>
</dbReference>
<dbReference type="SUPFAM" id="SSF52833">
    <property type="entry name" value="Thioredoxin-like"/>
    <property type="match status" value="1"/>
</dbReference>
<keyword id="KW-0150">Chloroplast</keyword>
<keyword id="KW-0539">Nucleus</keyword>
<keyword id="KW-0934">Plastid</keyword>
<keyword id="KW-1185">Reference proteome</keyword>
<keyword id="KW-0809">Transit peptide</keyword>
<gene>
    <name evidence="11" type="primary">MRL7</name>
    <name evidence="12" type="synonym">ECB1</name>
    <name evidence="13" type="synonym">RCB</name>
    <name evidence="10" type="synonym">SVR4</name>
    <name evidence="15" type="ordered locus">At4g28590</name>
</gene>
<organism>
    <name type="scientific">Arabidopsis thaliana</name>
    <name type="common">Mouse-ear cress</name>
    <dbReference type="NCBI Taxonomy" id="3702"/>
    <lineage>
        <taxon>Eukaryota</taxon>
        <taxon>Viridiplantae</taxon>
        <taxon>Streptophyta</taxon>
        <taxon>Embryophyta</taxon>
        <taxon>Tracheophyta</taxon>
        <taxon>Spermatophyta</taxon>
        <taxon>Magnoliopsida</taxon>
        <taxon>eudicotyledons</taxon>
        <taxon>Gunneridae</taxon>
        <taxon>Pentapetalae</taxon>
        <taxon>rosids</taxon>
        <taxon>malvids</taxon>
        <taxon>Brassicales</taxon>
        <taxon>Brassicaceae</taxon>
        <taxon>Camelineae</taxon>
        <taxon>Arabidopsis</taxon>
    </lineage>
</organism>